<organism>
    <name type="scientific">Mycobacterium avium (strain 104)</name>
    <dbReference type="NCBI Taxonomy" id="243243"/>
    <lineage>
        <taxon>Bacteria</taxon>
        <taxon>Bacillati</taxon>
        <taxon>Actinomycetota</taxon>
        <taxon>Actinomycetes</taxon>
        <taxon>Mycobacteriales</taxon>
        <taxon>Mycobacteriaceae</taxon>
        <taxon>Mycobacterium</taxon>
        <taxon>Mycobacterium avium complex (MAC)</taxon>
    </lineage>
</organism>
<protein>
    <recommendedName>
        <fullName evidence="1">Argininosuccinate synthase</fullName>
        <ecNumber evidence="1">6.3.4.5</ecNumber>
    </recommendedName>
    <alternativeName>
        <fullName evidence="1">Citrulline--aspartate ligase</fullName>
    </alternativeName>
</protein>
<feature type="chain" id="PRO_1000000406" description="Argininosuccinate synthase">
    <location>
        <begin position="1"/>
        <end position="398"/>
    </location>
</feature>
<feature type="binding site" evidence="1">
    <location>
        <begin position="8"/>
        <end position="16"/>
    </location>
    <ligand>
        <name>ATP</name>
        <dbReference type="ChEBI" id="CHEBI:30616"/>
    </ligand>
</feature>
<feature type="binding site" evidence="1">
    <location>
        <position position="87"/>
    </location>
    <ligand>
        <name>L-citrulline</name>
        <dbReference type="ChEBI" id="CHEBI:57743"/>
    </ligand>
</feature>
<feature type="binding site" evidence="1">
    <location>
        <position position="117"/>
    </location>
    <ligand>
        <name>ATP</name>
        <dbReference type="ChEBI" id="CHEBI:30616"/>
    </ligand>
</feature>
<feature type="binding site" evidence="1">
    <location>
        <position position="119"/>
    </location>
    <ligand>
        <name>L-aspartate</name>
        <dbReference type="ChEBI" id="CHEBI:29991"/>
    </ligand>
</feature>
<feature type="binding site" evidence="1">
    <location>
        <position position="123"/>
    </location>
    <ligand>
        <name>L-aspartate</name>
        <dbReference type="ChEBI" id="CHEBI:29991"/>
    </ligand>
</feature>
<feature type="binding site" evidence="1">
    <location>
        <position position="123"/>
    </location>
    <ligand>
        <name>L-citrulline</name>
        <dbReference type="ChEBI" id="CHEBI:57743"/>
    </ligand>
</feature>
<feature type="binding site" evidence="1">
    <location>
        <position position="124"/>
    </location>
    <ligand>
        <name>L-aspartate</name>
        <dbReference type="ChEBI" id="CHEBI:29991"/>
    </ligand>
</feature>
<feature type="binding site" evidence="1">
    <location>
        <position position="127"/>
    </location>
    <ligand>
        <name>L-citrulline</name>
        <dbReference type="ChEBI" id="CHEBI:57743"/>
    </ligand>
</feature>
<feature type="binding site" evidence="1">
    <location>
        <position position="175"/>
    </location>
    <ligand>
        <name>L-citrulline</name>
        <dbReference type="ChEBI" id="CHEBI:57743"/>
    </ligand>
</feature>
<feature type="binding site" evidence="1">
    <location>
        <position position="260"/>
    </location>
    <ligand>
        <name>L-citrulline</name>
        <dbReference type="ChEBI" id="CHEBI:57743"/>
    </ligand>
</feature>
<feature type="binding site" evidence="1">
    <location>
        <position position="272"/>
    </location>
    <ligand>
        <name>L-citrulline</name>
        <dbReference type="ChEBI" id="CHEBI:57743"/>
    </ligand>
</feature>
<evidence type="ECO:0000255" key="1">
    <source>
        <dbReference type="HAMAP-Rule" id="MF_00005"/>
    </source>
</evidence>
<proteinExistence type="inferred from homology"/>
<name>ASSY_MYCA1</name>
<accession>A0QHA8</accession>
<gene>
    <name evidence="1" type="primary">argG</name>
    <name type="ordered locus">MAV_3112</name>
</gene>
<comment type="catalytic activity">
    <reaction evidence="1">
        <text>L-citrulline + L-aspartate + ATP = 2-(N(omega)-L-arginino)succinate + AMP + diphosphate + H(+)</text>
        <dbReference type="Rhea" id="RHEA:10932"/>
        <dbReference type="ChEBI" id="CHEBI:15378"/>
        <dbReference type="ChEBI" id="CHEBI:29991"/>
        <dbReference type="ChEBI" id="CHEBI:30616"/>
        <dbReference type="ChEBI" id="CHEBI:33019"/>
        <dbReference type="ChEBI" id="CHEBI:57472"/>
        <dbReference type="ChEBI" id="CHEBI:57743"/>
        <dbReference type="ChEBI" id="CHEBI:456215"/>
        <dbReference type="EC" id="6.3.4.5"/>
    </reaction>
</comment>
<comment type="pathway">
    <text evidence="1">Amino-acid biosynthesis; L-arginine biosynthesis; L-arginine from L-ornithine and carbamoyl phosphate: step 2/3.</text>
</comment>
<comment type="subunit">
    <text evidence="1">Homotetramer.</text>
</comment>
<comment type="subcellular location">
    <subcellularLocation>
        <location evidence="1">Cytoplasm</location>
    </subcellularLocation>
</comment>
<comment type="similarity">
    <text evidence="1">Belongs to the argininosuccinate synthase family. Type 1 subfamily.</text>
</comment>
<sequence length="398" mass="43780">MSERVILAYSGGLDTSVAISWIGKETGREVVAVAIDLGQGGEDMEVIRQRALDCGAVEAVVVDARDEFAEGYCLPTIRNNALYMDRYPLVSAISRPLIVKHLVAAAREHGGSIVAHGCTGKGNDQVRFEVGFASLAPDLEVLAPVRDYAWTREKAIAFAEENAIPINVTKRSPFSIDQNVWGRAVETGFLEHLWNAPTKDVYAYTEDPTLNWSTPDEVIVGFERGVPVSIDGKPVSVLGAIEELNARAGAQGVGRLDVVEDRLVGIKSREIYEAPGAMVLITAHTELEHVTLERELGRFKRHTDQRWAELVYDGLWYSPLKAALESFVDKTQEHVTGEIRMVLHGGHIAVNGRRSAESLYDFNLATYDEGDSFDQSAAKGFVYVHGLSSKIASRRDQR</sequence>
<keyword id="KW-0028">Amino-acid biosynthesis</keyword>
<keyword id="KW-0055">Arginine biosynthesis</keyword>
<keyword id="KW-0067">ATP-binding</keyword>
<keyword id="KW-0963">Cytoplasm</keyword>
<keyword id="KW-0436">Ligase</keyword>
<keyword id="KW-0547">Nucleotide-binding</keyword>
<dbReference type="EC" id="6.3.4.5" evidence="1"/>
<dbReference type="EMBL" id="CP000479">
    <property type="protein sequence ID" value="ABK67697.1"/>
    <property type="molecule type" value="Genomic_DNA"/>
</dbReference>
<dbReference type="RefSeq" id="WP_009977300.1">
    <property type="nucleotide sequence ID" value="NC_008595.1"/>
</dbReference>
<dbReference type="SMR" id="A0QHA8"/>
<dbReference type="KEGG" id="mav:MAV_3112"/>
<dbReference type="HOGENOM" id="CLU_032784_4_2_11"/>
<dbReference type="UniPathway" id="UPA00068">
    <property type="reaction ID" value="UER00113"/>
</dbReference>
<dbReference type="Proteomes" id="UP000001574">
    <property type="component" value="Chromosome"/>
</dbReference>
<dbReference type="GO" id="GO:0005737">
    <property type="term" value="C:cytoplasm"/>
    <property type="evidence" value="ECO:0007669"/>
    <property type="project" value="UniProtKB-SubCell"/>
</dbReference>
<dbReference type="GO" id="GO:0004055">
    <property type="term" value="F:argininosuccinate synthase activity"/>
    <property type="evidence" value="ECO:0007669"/>
    <property type="project" value="UniProtKB-UniRule"/>
</dbReference>
<dbReference type="GO" id="GO:0005524">
    <property type="term" value="F:ATP binding"/>
    <property type="evidence" value="ECO:0007669"/>
    <property type="project" value="UniProtKB-UniRule"/>
</dbReference>
<dbReference type="GO" id="GO:0000053">
    <property type="term" value="P:argininosuccinate metabolic process"/>
    <property type="evidence" value="ECO:0007669"/>
    <property type="project" value="TreeGrafter"/>
</dbReference>
<dbReference type="GO" id="GO:0006526">
    <property type="term" value="P:L-arginine biosynthetic process"/>
    <property type="evidence" value="ECO:0007669"/>
    <property type="project" value="UniProtKB-UniRule"/>
</dbReference>
<dbReference type="GO" id="GO:0000050">
    <property type="term" value="P:urea cycle"/>
    <property type="evidence" value="ECO:0007669"/>
    <property type="project" value="TreeGrafter"/>
</dbReference>
<dbReference type="CDD" id="cd01999">
    <property type="entry name" value="ASS"/>
    <property type="match status" value="1"/>
</dbReference>
<dbReference type="FunFam" id="3.40.50.620:FF:000038">
    <property type="entry name" value="Argininosuccinate synthase"/>
    <property type="match status" value="1"/>
</dbReference>
<dbReference type="FunFam" id="3.90.1260.10:FF:000006">
    <property type="entry name" value="Argininosuccinate synthase"/>
    <property type="match status" value="1"/>
</dbReference>
<dbReference type="Gene3D" id="3.90.1260.10">
    <property type="entry name" value="Argininosuccinate synthetase, chain A, domain 2"/>
    <property type="match status" value="1"/>
</dbReference>
<dbReference type="Gene3D" id="3.40.50.620">
    <property type="entry name" value="HUPs"/>
    <property type="match status" value="1"/>
</dbReference>
<dbReference type="Gene3D" id="1.20.5.470">
    <property type="entry name" value="Single helix bin"/>
    <property type="match status" value="1"/>
</dbReference>
<dbReference type="HAMAP" id="MF_00005">
    <property type="entry name" value="Arg_succ_synth_type1"/>
    <property type="match status" value="1"/>
</dbReference>
<dbReference type="InterPro" id="IPR048268">
    <property type="entry name" value="Arginosuc_syn_C"/>
</dbReference>
<dbReference type="InterPro" id="IPR048267">
    <property type="entry name" value="Arginosuc_syn_N"/>
</dbReference>
<dbReference type="InterPro" id="IPR001518">
    <property type="entry name" value="Arginosuc_synth"/>
</dbReference>
<dbReference type="InterPro" id="IPR018223">
    <property type="entry name" value="Arginosuc_synth_CS"/>
</dbReference>
<dbReference type="InterPro" id="IPR023434">
    <property type="entry name" value="Arginosuc_synth_type_1_subfam"/>
</dbReference>
<dbReference type="InterPro" id="IPR024074">
    <property type="entry name" value="AS_cat/multimer_dom_body"/>
</dbReference>
<dbReference type="InterPro" id="IPR014729">
    <property type="entry name" value="Rossmann-like_a/b/a_fold"/>
</dbReference>
<dbReference type="NCBIfam" id="TIGR00032">
    <property type="entry name" value="argG"/>
    <property type="match status" value="1"/>
</dbReference>
<dbReference type="NCBIfam" id="NF001770">
    <property type="entry name" value="PRK00509.1"/>
    <property type="match status" value="1"/>
</dbReference>
<dbReference type="PANTHER" id="PTHR11587">
    <property type="entry name" value="ARGININOSUCCINATE SYNTHASE"/>
    <property type="match status" value="1"/>
</dbReference>
<dbReference type="PANTHER" id="PTHR11587:SF2">
    <property type="entry name" value="ARGININOSUCCINATE SYNTHASE"/>
    <property type="match status" value="1"/>
</dbReference>
<dbReference type="Pfam" id="PF20979">
    <property type="entry name" value="Arginosuc_syn_C"/>
    <property type="match status" value="1"/>
</dbReference>
<dbReference type="Pfam" id="PF00764">
    <property type="entry name" value="Arginosuc_synth"/>
    <property type="match status" value="1"/>
</dbReference>
<dbReference type="SUPFAM" id="SSF52402">
    <property type="entry name" value="Adenine nucleotide alpha hydrolases-like"/>
    <property type="match status" value="1"/>
</dbReference>
<dbReference type="SUPFAM" id="SSF69864">
    <property type="entry name" value="Argininosuccinate synthetase, C-terminal domain"/>
    <property type="match status" value="1"/>
</dbReference>
<dbReference type="PROSITE" id="PS00564">
    <property type="entry name" value="ARGININOSUCCIN_SYN_1"/>
    <property type="match status" value="1"/>
</dbReference>
<dbReference type="PROSITE" id="PS00565">
    <property type="entry name" value="ARGININOSUCCIN_SYN_2"/>
    <property type="match status" value="1"/>
</dbReference>
<reference key="1">
    <citation type="submission" date="2006-10" db="EMBL/GenBank/DDBJ databases">
        <authorList>
            <person name="Fleischmann R.D."/>
            <person name="Dodson R.J."/>
            <person name="Haft D.H."/>
            <person name="Merkel J.S."/>
            <person name="Nelson W.C."/>
            <person name="Fraser C.M."/>
        </authorList>
    </citation>
    <scope>NUCLEOTIDE SEQUENCE [LARGE SCALE GENOMIC DNA]</scope>
    <source>
        <strain>104</strain>
    </source>
</reference>